<feature type="signal peptide" evidence="3">
    <location>
        <begin position="1"/>
        <end position="18"/>
    </location>
</feature>
<feature type="chain" id="PRO_0000395137" description="Probable beta-glucosidase btgE">
    <location>
        <begin position="19"/>
        <end position="552"/>
    </location>
</feature>
<feature type="region of interest" description="Disordered" evidence="4">
    <location>
        <begin position="250"/>
        <end position="291"/>
    </location>
</feature>
<feature type="compositionally biased region" description="Low complexity" evidence="4">
    <location>
        <begin position="251"/>
        <end position="289"/>
    </location>
</feature>
<feature type="active site" description="Proton donor" evidence="2">
    <location>
        <position position="392"/>
    </location>
</feature>
<feature type="active site" description="Nucleophile" evidence="2">
    <location>
        <position position="488"/>
    </location>
</feature>
<gene>
    <name type="primary">btgE</name>
    <name type="ORF">NFIA_098360</name>
</gene>
<reference key="1">
    <citation type="journal article" date="2008" name="PLoS Genet.">
        <title>Genomic islands in the pathogenic filamentous fungus Aspergillus fumigatus.</title>
        <authorList>
            <person name="Fedorova N.D."/>
            <person name="Khaldi N."/>
            <person name="Joardar V.S."/>
            <person name="Maiti R."/>
            <person name="Amedeo P."/>
            <person name="Anderson M.J."/>
            <person name="Crabtree J."/>
            <person name="Silva J.C."/>
            <person name="Badger J.H."/>
            <person name="Albarraq A."/>
            <person name="Angiuoli S."/>
            <person name="Bussey H."/>
            <person name="Bowyer P."/>
            <person name="Cotty P.J."/>
            <person name="Dyer P.S."/>
            <person name="Egan A."/>
            <person name="Galens K."/>
            <person name="Fraser-Liggett C.M."/>
            <person name="Haas B.J."/>
            <person name="Inman J.M."/>
            <person name="Kent R."/>
            <person name="Lemieux S."/>
            <person name="Malavazi I."/>
            <person name="Orvis J."/>
            <person name="Roemer T."/>
            <person name="Ronning C.M."/>
            <person name="Sundaram J.P."/>
            <person name="Sutton G."/>
            <person name="Turner G."/>
            <person name="Venter J.C."/>
            <person name="White O.R."/>
            <person name="Whitty B.R."/>
            <person name="Youngman P."/>
            <person name="Wolfe K.H."/>
            <person name="Goldman G.H."/>
            <person name="Wortman J.R."/>
            <person name="Jiang B."/>
            <person name="Denning D.W."/>
            <person name="Nierman W.C."/>
        </authorList>
    </citation>
    <scope>NUCLEOTIDE SEQUENCE [LARGE SCALE GENOMIC DNA]</scope>
    <source>
        <strain>ATCC 1020 / DSM 3700 / CBS 544.65 / FGSC A1164 / JCM 1740 / NRRL 181 / WB 181</strain>
    </source>
</reference>
<comment type="function">
    <text evidence="1">Beta-glucosidases are one of a number of cellulolytic enzymes involved in the degradation of cellulosic biomass. Catalyzes the last step releasing glucose from the inhibitory cellobiose (By similarity).</text>
</comment>
<comment type="catalytic activity">
    <reaction>
        <text>Hydrolysis of terminal, non-reducing beta-D-glucosyl residues with release of beta-D-glucose.</text>
        <dbReference type="EC" id="3.2.1.21"/>
    </reaction>
</comment>
<comment type="pathway">
    <text>Glycan metabolism; cellulose degradation.</text>
</comment>
<comment type="subcellular location">
    <subcellularLocation>
        <location evidence="1">Secreted</location>
        <location evidence="1">Cell wall</location>
    </subcellularLocation>
    <text evidence="1">Covalently-linked to the cell wall.</text>
</comment>
<comment type="similarity">
    <text evidence="5">Belongs to the glycosyl hydrolase 17 family.</text>
</comment>
<organism>
    <name type="scientific">Neosartorya fischeri (strain ATCC 1020 / DSM 3700 / CBS 544.65 / FGSC A1164 / JCM 1740 / NRRL 181 / WB 181)</name>
    <name type="common">Aspergillus fischerianus</name>
    <dbReference type="NCBI Taxonomy" id="331117"/>
    <lineage>
        <taxon>Eukaryota</taxon>
        <taxon>Fungi</taxon>
        <taxon>Dikarya</taxon>
        <taxon>Ascomycota</taxon>
        <taxon>Pezizomycotina</taxon>
        <taxon>Eurotiomycetes</taxon>
        <taxon>Eurotiomycetidae</taxon>
        <taxon>Eurotiales</taxon>
        <taxon>Aspergillaceae</taxon>
        <taxon>Aspergillus</taxon>
        <taxon>Aspergillus subgen. Fumigati</taxon>
    </lineage>
</organism>
<sequence>MRGAILATAAALAGTAMADVAHMRRHGHDSFHQRRAAVAEADATCGCTTEVVTVWGPPTLIPVATPTPSTVTSEAVTTLHSTSTSTVTIVASASTPATSSSPATPKVPLPTPAITNFPSTGVYTIPATTVTVFDTTTVCGATTTELPAGTHTYGGVTTVVETATTVVCPYATVEPSGTTVTSVIKTTTYVCPTPGTYTIAPTTTTVPTSTVVVYPTPAVITPGTYTQPEQTVTVTRTDYTYVCPFTGQNEPTSAPAAPSTTAVPATTTAAVPSTSSAAPSSSSTAPASTGAVGGQMGMTYTPYTKGGDCKDKSSVLSEVANLKSKGFTHVRVYSTDCNSLEYIGEAARTSGLQMIIGVFISSTGVSGAQDQVTAISKWAQWDLVSLIVVGNEAIQNGYCDASTLAGFISSAKSAFQSAGYTGKVTTTEPINVWQAYGSTLCGVCDIIGANIHPFFNADVSADQAGKFVAQEIKVLEGICPGKDVLNLETGWPHAGNANGKAVPGASEQAIAIKSIAQEVGSKSVFFSYFDDLWKEPGQFDVERYWGCIDTFN</sequence>
<evidence type="ECO:0000250" key="1"/>
<evidence type="ECO:0000250" key="2">
    <source>
        <dbReference type="UniProtKB" id="O22317"/>
    </source>
</evidence>
<evidence type="ECO:0000255" key="3"/>
<evidence type="ECO:0000256" key="4">
    <source>
        <dbReference type="SAM" id="MobiDB-lite"/>
    </source>
</evidence>
<evidence type="ECO:0000305" key="5"/>
<dbReference type="EC" id="3.2.1.21"/>
<dbReference type="EMBL" id="DS027694">
    <property type="protein sequence ID" value="EAW20206.1"/>
    <property type="molecule type" value="Genomic_DNA"/>
</dbReference>
<dbReference type="RefSeq" id="XP_001262103.1">
    <property type="nucleotide sequence ID" value="XM_001262102.1"/>
</dbReference>
<dbReference type="SMR" id="A1DBG6"/>
<dbReference type="STRING" id="331117.A1DBG6"/>
<dbReference type="EnsemblFungi" id="EAW20206">
    <property type="protein sequence ID" value="EAW20206"/>
    <property type="gene ID" value="NFIA_098360"/>
</dbReference>
<dbReference type="GeneID" id="4588449"/>
<dbReference type="KEGG" id="nfi:NFIA_098360"/>
<dbReference type="VEuPathDB" id="FungiDB:NFIA_098360"/>
<dbReference type="eggNOG" id="ENOG502QS0R">
    <property type="taxonomic scope" value="Eukaryota"/>
</dbReference>
<dbReference type="HOGENOM" id="CLU_027285_2_1_1"/>
<dbReference type="OMA" id="VVCPYAT"/>
<dbReference type="OrthoDB" id="4082933at2759"/>
<dbReference type="UniPathway" id="UPA00696"/>
<dbReference type="Proteomes" id="UP000006702">
    <property type="component" value="Unassembled WGS sequence"/>
</dbReference>
<dbReference type="GO" id="GO:0009986">
    <property type="term" value="C:cell surface"/>
    <property type="evidence" value="ECO:0007669"/>
    <property type="project" value="TreeGrafter"/>
</dbReference>
<dbReference type="GO" id="GO:0005576">
    <property type="term" value="C:extracellular region"/>
    <property type="evidence" value="ECO:0007669"/>
    <property type="project" value="UniProtKB-KW"/>
</dbReference>
<dbReference type="GO" id="GO:0009277">
    <property type="term" value="C:fungal-type cell wall"/>
    <property type="evidence" value="ECO:0007669"/>
    <property type="project" value="TreeGrafter"/>
</dbReference>
<dbReference type="GO" id="GO:0042973">
    <property type="term" value="F:glucan endo-1,3-beta-D-glucosidase activity"/>
    <property type="evidence" value="ECO:0007669"/>
    <property type="project" value="TreeGrafter"/>
</dbReference>
<dbReference type="GO" id="GO:0071555">
    <property type="term" value="P:cell wall organization"/>
    <property type="evidence" value="ECO:0007669"/>
    <property type="project" value="TreeGrafter"/>
</dbReference>
<dbReference type="GO" id="GO:0030245">
    <property type="term" value="P:cellulose catabolic process"/>
    <property type="evidence" value="ECO:0007669"/>
    <property type="project" value="UniProtKB-UniPathway"/>
</dbReference>
<dbReference type="FunFam" id="3.20.20.80:FF:000165">
    <property type="entry name" value="Cell wall glucanase (Scw11)"/>
    <property type="match status" value="1"/>
</dbReference>
<dbReference type="FunFam" id="3.20.20.80:FF:000160">
    <property type="entry name" value="Probable beta-glucosidase btgE"/>
    <property type="match status" value="1"/>
</dbReference>
<dbReference type="Gene3D" id="3.20.20.80">
    <property type="entry name" value="Glycosidases"/>
    <property type="match status" value="2"/>
</dbReference>
<dbReference type="InterPro" id="IPR050732">
    <property type="entry name" value="Beta-glucan_modifiers"/>
</dbReference>
<dbReference type="InterPro" id="IPR017853">
    <property type="entry name" value="Glycoside_hydrolase_SF"/>
</dbReference>
<dbReference type="PANTHER" id="PTHR16631:SF24">
    <property type="entry name" value="FAMILY 17 GLUCOSIDASE SCW11-RELATED"/>
    <property type="match status" value="1"/>
</dbReference>
<dbReference type="PANTHER" id="PTHR16631">
    <property type="entry name" value="GLUCAN 1,3-BETA-GLUCOSIDASE"/>
    <property type="match status" value="1"/>
</dbReference>
<dbReference type="SUPFAM" id="SSF51445">
    <property type="entry name" value="(Trans)glycosidases"/>
    <property type="match status" value="1"/>
</dbReference>
<protein>
    <recommendedName>
        <fullName>Probable beta-glucosidase btgE</fullName>
        <ecNumber>3.2.1.21</ecNumber>
    </recommendedName>
    <alternativeName>
        <fullName>Beta-D-glucoside glucohydrolase btgE</fullName>
    </alternativeName>
    <alternativeName>
        <fullName>Cellobiase btgE</fullName>
    </alternativeName>
    <alternativeName>
        <fullName>Gentiobiase btgE</fullName>
    </alternativeName>
</protein>
<keyword id="KW-0119">Carbohydrate metabolism</keyword>
<keyword id="KW-0134">Cell wall</keyword>
<keyword id="KW-0136">Cellulose degradation</keyword>
<keyword id="KW-0326">Glycosidase</keyword>
<keyword id="KW-0378">Hydrolase</keyword>
<keyword id="KW-0624">Polysaccharide degradation</keyword>
<keyword id="KW-1185">Reference proteome</keyword>
<keyword id="KW-0964">Secreted</keyword>
<keyword id="KW-0732">Signal</keyword>
<accession>A1DBG6</accession>
<proteinExistence type="inferred from homology"/>
<name>BTGE_NEOFI</name>